<proteinExistence type="inferred from homology"/>
<evidence type="ECO:0000255" key="1">
    <source>
        <dbReference type="HAMAP-Rule" id="MF_01418"/>
    </source>
</evidence>
<sequence>MSTLGHQYDNSLVSNAFGFLRLPMNFQPYDSDADWVITGVPFDMATSGRAGGRHGPAAIRQVSTNLAWEHNRFPWNFDMRERLNVVDCGDLVYAFGDAREMSEKLQAHAEKLLAAGKRMLSFGGDHFVTLPLLRAHAKHFGKMALVHFDAHTDTYANGCEFDHGTMFYTAPKEGLIDPNHSVQIGIRTEFDKDNGFTVLDACQVNDRSVDDVIAQVKQIVGDMPVYLTFDIDCLDPAFAPGTGTPVIGGLTSDRAIKLVRGLKDLNIVGMDVVEVAPAYDQSEITALAAATLALEMLYIQAAKKGE</sequence>
<organism>
    <name type="scientific">Escherichia coli (strain K12 / DH10B)</name>
    <dbReference type="NCBI Taxonomy" id="316385"/>
    <lineage>
        <taxon>Bacteria</taxon>
        <taxon>Pseudomonadati</taxon>
        <taxon>Pseudomonadota</taxon>
        <taxon>Gammaproteobacteria</taxon>
        <taxon>Enterobacterales</taxon>
        <taxon>Enterobacteriaceae</taxon>
        <taxon>Escherichia</taxon>
    </lineage>
</organism>
<protein>
    <recommendedName>
        <fullName evidence="1">Agmatinase</fullName>
        <ecNumber evidence="1">3.5.3.11</ecNumber>
    </recommendedName>
    <alternativeName>
        <fullName evidence="1">Agmatine ureohydrolase</fullName>
        <shortName evidence="1">AUH</shortName>
    </alternativeName>
</protein>
<dbReference type="EC" id="3.5.3.11" evidence="1"/>
<dbReference type="EMBL" id="CP000948">
    <property type="protein sequence ID" value="ACB04033.1"/>
    <property type="molecule type" value="Genomic_DNA"/>
</dbReference>
<dbReference type="RefSeq" id="WP_000105566.1">
    <property type="nucleotide sequence ID" value="NC_010473.1"/>
</dbReference>
<dbReference type="SMR" id="B1XF99"/>
<dbReference type="GeneID" id="89517749"/>
<dbReference type="KEGG" id="ecd:ECDH10B_3112"/>
<dbReference type="HOGENOM" id="CLU_039478_0_0_6"/>
<dbReference type="UniPathway" id="UPA00534">
    <property type="reaction ID" value="UER00287"/>
</dbReference>
<dbReference type="GO" id="GO:0008783">
    <property type="term" value="F:agmatinase activity"/>
    <property type="evidence" value="ECO:0007669"/>
    <property type="project" value="UniProtKB-UniRule"/>
</dbReference>
<dbReference type="GO" id="GO:0030145">
    <property type="term" value="F:manganese ion binding"/>
    <property type="evidence" value="ECO:0007669"/>
    <property type="project" value="InterPro"/>
</dbReference>
<dbReference type="GO" id="GO:0033389">
    <property type="term" value="P:putrescine biosynthetic process from arginine, via agmatine"/>
    <property type="evidence" value="ECO:0007669"/>
    <property type="project" value="TreeGrafter"/>
</dbReference>
<dbReference type="GO" id="GO:0008295">
    <property type="term" value="P:spermidine biosynthetic process"/>
    <property type="evidence" value="ECO:0007669"/>
    <property type="project" value="UniProtKB-UniRule"/>
</dbReference>
<dbReference type="CDD" id="cd11592">
    <property type="entry name" value="Agmatinase_PAH"/>
    <property type="match status" value="1"/>
</dbReference>
<dbReference type="FunFam" id="3.40.800.10:FF:000001">
    <property type="entry name" value="Agmatinase"/>
    <property type="match status" value="1"/>
</dbReference>
<dbReference type="Gene3D" id="3.40.800.10">
    <property type="entry name" value="Ureohydrolase domain"/>
    <property type="match status" value="1"/>
</dbReference>
<dbReference type="HAMAP" id="MF_01418">
    <property type="entry name" value="SpeB"/>
    <property type="match status" value="1"/>
</dbReference>
<dbReference type="InterPro" id="IPR023694">
    <property type="entry name" value="Agmatinase"/>
</dbReference>
<dbReference type="InterPro" id="IPR005925">
    <property type="entry name" value="Agmatinase-rel"/>
</dbReference>
<dbReference type="InterPro" id="IPR006035">
    <property type="entry name" value="Ureohydrolase"/>
</dbReference>
<dbReference type="InterPro" id="IPR023696">
    <property type="entry name" value="Ureohydrolase_dom_sf"/>
</dbReference>
<dbReference type="InterPro" id="IPR020855">
    <property type="entry name" value="Ureohydrolase_Mn_BS"/>
</dbReference>
<dbReference type="NCBIfam" id="TIGR01230">
    <property type="entry name" value="agmatinase"/>
    <property type="match status" value="1"/>
</dbReference>
<dbReference type="NCBIfam" id="NF002564">
    <property type="entry name" value="PRK02190.1"/>
    <property type="match status" value="1"/>
</dbReference>
<dbReference type="PANTHER" id="PTHR11358">
    <property type="entry name" value="ARGINASE/AGMATINASE"/>
    <property type="match status" value="1"/>
</dbReference>
<dbReference type="PANTHER" id="PTHR11358:SF26">
    <property type="entry name" value="GUANIDINO ACID HYDROLASE, MITOCHONDRIAL"/>
    <property type="match status" value="1"/>
</dbReference>
<dbReference type="Pfam" id="PF00491">
    <property type="entry name" value="Arginase"/>
    <property type="match status" value="1"/>
</dbReference>
<dbReference type="PIRSF" id="PIRSF036979">
    <property type="entry name" value="Arginase"/>
    <property type="match status" value="1"/>
</dbReference>
<dbReference type="SUPFAM" id="SSF52768">
    <property type="entry name" value="Arginase/deacetylase"/>
    <property type="match status" value="1"/>
</dbReference>
<dbReference type="PROSITE" id="PS01053">
    <property type="entry name" value="ARGINASE_1"/>
    <property type="match status" value="1"/>
</dbReference>
<dbReference type="PROSITE" id="PS51409">
    <property type="entry name" value="ARGINASE_2"/>
    <property type="match status" value="1"/>
</dbReference>
<name>SPEB_ECODH</name>
<accession>B1XF99</accession>
<reference key="1">
    <citation type="journal article" date="2008" name="J. Bacteriol.">
        <title>The complete genome sequence of Escherichia coli DH10B: insights into the biology of a laboratory workhorse.</title>
        <authorList>
            <person name="Durfee T."/>
            <person name="Nelson R."/>
            <person name="Baldwin S."/>
            <person name="Plunkett G. III"/>
            <person name="Burland V."/>
            <person name="Mau B."/>
            <person name="Petrosino J.F."/>
            <person name="Qin X."/>
            <person name="Muzny D.M."/>
            <person name="Ayele M."/>
            <person name="Gibbs R.A."/>
            <person name="Csorgo B."/>
            <person name="Posfai G."/>
            <person name="Weinstock G.M."/>
            <person name="Blattner F.R."/>
        </authorList>
    </citation>
    <scope>NUCLEOTIDE SEQUENCE [LARGE SCALE GENOMIC DNA]</scope>
    <source>
        <strain>K12 / DH10B</strain>
    </source>
</reference>
<comment type="function">
    <text evidence="1">Catalyzes the formation of putrescine from agmatine.</text>
</comment>
<comment type="catalytic activity">
    <reaction evidence="1">
        <text>agmatine + H2O = urea + putrescine</text>
        <dbReference type="Rhea" id="RHEA:13929"/>
        <dbReference type="ChEBI" id="CHEBI:15377"/>
        <dbReference type="ChEBI" id="CHEBI:16199"/>
        <dbReference type="ChEBI" id="CHEBI:58145"/>
        <dbReference type="ChEBI" id="CHEBI:326268"/>
        <dbReference type="EC" id="3.5.3.11"/>
    </reaction>
</comment>
<comment type="cofactor">
    <cofactor evidence="1">
        <name>Mn(2+)</name>
        <dbReference type="ChEBI" id="CHEBI:29035"/>
    </cofactor>
</comment>
<comment type="pathway">
    <text evidence="1">Amine and polyamine biosynthesis; putrescine biosynthesis via agmatine pathway; putrescine from agmatine: step 1/1.</text>
</comment>
<comment type="similarity">
    <text evidence="1">Belongs to the arginase family. Agmatinase subfamily.</text>
</comment>
<feature type="chain" id="PRO_1000145611" description="Agmatinase">
    <location>
        <begin position="1"/>
        <end position="306"/>
    </location>
</feature>
<feature type="binding site" evidence="1">
    <location>
        <position position="126"/>
    </location>
    <ligand>
        <name>Mn(2+)</name>
        <dbReference type="ChEBI" id="CHEBI:29035"/>
    </ligand>
</feature>
<feature type="binding site" evidence="1">
    <location>
        <position position="149"/>
    </location>
    <ligand>
        <name>Mn(2+)</name>
        <dbReference type="ChEBI" id="CHEBI:29035"/>
    </ligand>
</feature>
<feature type="binding site" evidence="1">
    <location>
        <position position="151"/>
    </location>
    <ligand>
        <name>Mn(2+)</name>
        <dbReference type="ChEBI" id="CHEBI:29035"/>
    </ligand>
</feature>
<feature type="binding site" evidence="1">
    <location>
        <position position="153"/>
    </location>
    <ligand>
        <name>Mn(2+)</name>
        <dbReference type="ChEBI" id="CHEBI:29035"/>
    </ligand>
</feature>
<feature type="binding site" evidence="1">
    <location>
        <position position="230"/>
    </location>
    <ligand>
        <name>Mn(2+)</name>
        <dbReference type="ChEBI" id="CHEBI:29035"/>
    </ligand>
</feature>
<feature type="binding site" evidence="1">
    <location>
        <position position="232"/>
    </location>
    <ligand>
        <name>Mn(2+)</name>
        <dbReference type="ChEBI" id="CHEBI:29035"/>
    </ligand>
</feature>
<gene>
    <name evidence="1" type="primary">speB</name>
    <name type="ordered locus">ECDH10B_3112</name>
</gene>
<keyword id="KW-0378">Hydrolase</keyword>
<keyword id="KW-0464">Manganese</keyword>
<keyword id="KW-0479">Metal-binding</keyword>
<keyword id="KW-0620">Polyamine biosynthesis</keyword>
<keyword id="KW-0661">Putrescine biosynthesis</keyword>
<keyword id="KW-0745">Spermidine biosynthesis</keyword>